<evidence type="ECO:0000250" key="1">
    <source>
        <dbReference type="UniProtKB" id="Q96EX3"/>
    </source>
</evidence>
<evidence type="ECO:0000255" key="2"/>
<evidence type="ECO:0000269" key="3">
    <source>
    </source>
</evidence>
<evidence type="ECO:0000269" key="4">
    <source>
    </source>
</evidence>
<evidence type="ECO:0000269" key="5">
    <source>
    </source>
</evidence>
<evidence type="ECO:0000305" key="6"/>
<evidence type="ECO:0007744" key="7">
    <source>
    </source>
</evidence>
<reference key="1">
    <citation type="journal article" date="2009" name="PLoS Biol.">
        <title>Lineage-specific biology revealed by a finished genome assembly of the mouse.</title>
        <authorList>
            <person name="Church D.M."/>
            <person name="Goodstadt L."/>
            <person name="Hillier L.W."/>
            <person name="Zody M.C."/>
            <person name="Goldstein S."/>
            <person name="She X."/>
            <person name="Bult C.J."/>
            <person name="Agarwala R."/>
            <person name="Cherry J.L."/>
            <person name="DiCuccio M."/>
            <person name="Hlavina W."/>
            <person name="Kapustin Y."/>
            <person name="Meric P."/>
            <person name="Maglott D."/>
            <person name="Birtle Z."/>
            <person name="Marques A.C."/>
            <person name="Graves T."/>
            <person name="Zhou S."/>
            <person name="Teague B."/>
            <person name="Potamousis K."/>
            <person name="Churas C."/>
            <person name="Place M."/>
            <person name="Herschleb J."/>
            <person name="Runnheim R."/>
            <person name="Forrest D."/>
            <person name="Amos-Landgraf J."/>
            <person name="Schwartz D.C."/>
            <person name="Cheng Z."/>
            <person name="Lindblad-Toh K."/>
            <person name="Eichler E.E."/>
            <person name="Ponting C.P."/>
        </authorList>
    </citation>
    <scope>NUCLEOTIDE SEQUENCE [LARGE SCALE GENOMIC DNA]</scope>
    <source>
        <strain>C57BL/6J</strain>
    </source>
</reference>
<reference key="2">
    <citation type="journal article" date="2004" name="Genome Res.">
        <title>The status, quality, and expansion of the NIH full-length cDNA project: the Mammalian Gene Collection (MGC).</title>
        <authorList>
            <consortium name="The MGC Project Team"/>
        </authorList>
    </citation>
    <scope>NUCLEOTIDE SEQUENCE [LARGE SCALE MRNA] OF 16-537</scope>
    <source>
        <strain>C57BL/6J</strain>
        <tissue>Embryonic germ cell</tissue>
    </source>
</reference>
<reference key="3">
    <citation type="journal article" date="2009" name="Cell. Mol. Life Sci.">
        <title>WDR34 is a novel TAK1-associated suppressor of the IL-1R/TLR3/TLR4-induced NF-kappaB activation pathway.</title>
        <authorList>
            <person name="Gao D."/>
            <person name="Wang R."/>
            <person name="Li B."/>
            <person name="Yang Y."/>
            <person name="Zhai Z."/>
            <person name="Chen D.Y."/>
        </authorList>
    </citation>
    <scope>TISSUE SPECIFICITY</scope>
</reference>
<reference key="4">
    <citation type="journal article" date="2010" name="Cell">
        <title>A tissue-specific atlas of mouse protein phosphorylation and expression.</title>
        <authorList>
            <person name="Huttlin E.L."/>
            <person name="Jedrychowski M.P."/>
            <person name="Elias J.E."/>
            <person name="Goswami T."/>
            <person name="Rad R."/>
            <person name="Beausoleil S.A."/>
            <person name="Villen J."/>
            <person name="Haas W."/>
            <person name="Sowa M.E."/>
            <person name="Gygi S.P."/>
        </authorList>
    </citation>
    <scope>PHOSPHORYLATION [LARGE SCALE ANALYSIS] AT SER-15</scope>
    <scope>IDENTIFICATION BY MASS SPECTROMETRY [LARGE SCALE ANALYSIS]</scope>
    <source>
        <tissue>Heart</tissue>
        <tissue>Kidney</tissue>
        <tissue>Lung</tissue>
        <tissue>Spleen</tissue>
        <tissue>Testis</tissue>
    </source>
</reference>
<reference key="5">
    <citation type="journal article" date="2013" name="Am. J. Hum. Genet.">
        <title>Mutations in the gene encoding IFT dynein complex component WDR34 cause Jeune asphyxiating thoracic dystrophy.</title>
        <authorList>
            <person name="Schmidts M."/>
            <person name="Vodopiutz J."/>
            <person name="Christou-Savina S."/>
            <person name="Cortes C.R."/>
            <person name="McInerney-Leo A.M."/>
            <person name="Emes R.D."/>
            <person name="Arts H.H."/>
            <person name="Tuysuz B."/>
            <person name="D'Silva J."/>
            <person name="Leo P.J."/>
            <person name="Giles T.C."/>
            <person name="Oud M.M."/>
            <person name="Harris J.A."/>
            <person name="Koopmans M."/>
            <person name="Marshall M."/>
            <person name="Elcioglu N."/>
            <person name="Kuechler A."/>
            <person name="Bockenhauer D."/>
            <person name="Moore A.T."/>
            <person name="Wilson L.C."/>
            <person name="Janecke A.R."/>
            <person name="Hurles M.E."/>
            <person name="Emmet W."/>
            <person name="Gardiner B."/>
            <person name="Streubel B."/>
            <person name="Dopita B."/>
            <person name="Zankl A."/>
            <person name="Kayserili H."/>
            <person name="Scambler P.J."/>
            <person name="Brown M.A."/>
            <person name="Beales P.L."/>
            <person name="Wicking C."/>
            <person name="Duncan E.L."/>
            <person name="Mitchison H.M."/>
        </authorList>
    </citation>
    <scope>SUBCELLULAR LOCATION</scope>
</reference>
<reference key="6">
    <citation type="journal article" date="2017" name="Hum. Mol. Genet.">
        <title>Loss of dynein-2 intermediate chain Wdr34 results in defects in retrograde ciliary protein trafficking and Hedgehog signaling in the mouse.</title>
        <authorList>
            <person name="Wu C."/>
            <person name="Li J."/>
            <person name="Peterson A."/>
            <person name="Tao K."/>
            <person name="Wang B."/>
        </authorList>
    </citation>
    <scope>DISRUPTION PHENOTYPE</scope>
    <scope>FUNCTION</scope>
    <scope>SUBCELLULAR LOCATION</scope>
</reference>
<comment type="function">
    <text evidence="1 5">Acts as one of several non-catalytic accessory components of the cytoplasmic dynein 2 complex (dynein-2 complex), a motor protein complex that drives the movement of cargos along microtubules within cilia and flagella in concert with the intraflagellar transport (IFT) system. DYNC2I2 plays a major role in retrograde ciliary protein trafficking and in ciliogenesis (PubMed:28379358). Required also to maintain a functional transition zone (By similarity).</text>
</comment>
<comment type="function">
    <text evidence="1">Acts as a negative regulator of the Toll-like and IL-1R receptor signaling pathways. Inhibits the MAP3K7-induced NF-kappa-B activation pathway. Inhibits MAP3K7 phosphorylation at 'Thr-184' and 'Thr-187' upon Il-1 beta stimulation.</text>
</comment>
<comment type="subunit">
    <text evidence="1">The cytoplasmic dynein 2 complex consists of two catalytic heavy chains (HCs) and a number of non-catalytic subunits presented by intermediate chains (ICs), light intermediate chains (LICs) and light chains (LCs). Among them, a heavy chain (DYNC2H1), two intermediate chains (DYNC2I2 and DYNC2I1), a light intermediate chain (DYNC2LI1), and a light chain (DYNLT2B) are unique to the cytoplasmic dynein complex 2, but a subset of the light chains are also shared by dynein-1 and dynein-2 complexes. Interacts with DYNC2I1; their C-terminal domains each bind a copy of the heavy chain, and their extended N-terminal regions are held together by an array of light chain dimers. Interacts with DYNLL2; this interaction is essential for dynein-2-mediated retrograde trafficking of ciliary proteins. Interacts with DYNLRB1; this interaction is essential for dynein-2-mediated retrograde trafficking of ciliary proteins. Interacts (via the WD domains) with MAP3K7 and TAB3. Interacts (via WD domains) with TAB2 (via C-terminus). Interacts (via WD domains) with TRAF6 (via TRAF-type domains).</text>
</comment>
<comment type="subcellular location">
    <subcellularLocation>
        <location evidence="1">Cytoplasm</location>
    </subcellularLocation>
    <subcellularLocation>
        <location evidence="4">Cytoplasm</location>
        <location evidence="4">Cytoskeleton</location>
        <location evidence="4">Cilium basal body</location>
    </subcellularLocation>
    <subcellularLocation>
        <location evidence="4">Cytoplasm</location>
        <location evidence="4">Cytoskeleton</location>
        <location evidence="4">Cilium axoneme</location>
    </subcellularLocation>
    <subcellularLocation>
        <location evidence="5">Cell projection</location>
        <location evidence="5">Cilium</location>
    </subcellularLocation>
    <subcellularLocation>
        <location evidence="1">Cytoplasm</location>
        <location evidence="1">Cytoskeleton</location>
        <location evidence="1">Microtubule organizing center</location>
        <location evidence="1">Centrosome</location>
    </subcellularLocation>
    <subcellularLocation>
        <location evidence="5">Cell projection</location>
        <location evidence="5">Filopodium</location>
    </subcellularLocation>
    <text evidence="4">Concentrates around the centrioles and basal bodies also showing axonemal staining.</text>
</comment>
<comment type="tissue specificity">
    <text evidence="3">Expressed in brain, thymus, heart, lung, liver, spleen, kidney, testis and intestine.</text>
</comment>
<comment type="disruption phenotype">
    <text evidence="5">The majority of deficient mice die in midgestation from 10.5 dpc to 12.5 dpc. The mutant embryos exhibit open brain, spinal bifida, microphthalmia, and polydactyly. Inactivation of the protein results also in short and stumpy cilia with an abnormal accumulation of ciliary proteins and defects in Sonic hedgehog signaling.</text>
</comment>
<comment type="similarity">
    <text evidence="6">Belongs to the dynein light intermediate chain family.</text>
</comment>
<comment type="sequence caution" evidence="6">
    <conflict type="erroneous initiation">
        <sequence resource="EMBL-CDS" id="AAH85113"/>
    </conflict>
    <text>Truncated N-terminus.</text>
</comment>
<name>DC2I2_MOUSE</name>
<gene>
    <name type="primary">Dync2i2</name>
    <name type="synonym">Wdr34</name>
</gene>
<feature type="chain" id="PRO_0000223621" description="Cytoplasmic dynein 2 intermediate chain 2">
    <location>
        <begin position="1"/>
        <end position="537"/>
    </location>
</feature>
<feature type="repeat" description="WD 1" evidence="2">
    <location>
        <begin position="216"/>
        <end position="256"/>
    </location>
</feature>
<feature type="repeat" description="WD 2" evidence="2">
    <location>
        <begin position="265"/>
        <end position="309"/>
    </location>
</feature>
<feature type="repeat" description="WD 3" evidence="2">
    <location>
        <begin position="391"/>
        <end position="431"/>
    </location>
</feature>
<feature type="repeat" description="WD 4" evidence="2">
    <location>
        <begin position="434"/>
        <end position="474"/>
    </location>
</feature>
<feature type="repeat" description="WD 5" evidence="2">
    <location>
        <begin position="481"/>
        <end position="521"/>
    </location>
</feature>
<feature type="region of interest" description="DYNLL2 binding" evidence="1">
    <location>
        <begin position="80"/>
        <end position="93"/>
    </location>
</feature>
<feature type="region of interest" description="DYNLRB1 binding" evidence="1">
    <location>
        <begin position="107"/>
        <end position="132"/>
    </location>
</feature>
<feature type="modified residue" description="Phosphoserine" evidence="7">
    <location>
        <position position="15"/>
    </location>
</feature>
<sequence length="537" mass="58174">MAMCASPRPFRRVGSAGAAALAAGGAGGAERRGRPAPLQDETLGVASVPSQWRSVQGIRGETKSCQTAGIATAESSAQARTHADAQVQTEAPEEPAAMAPVSQYDTLRLEAFLRRVEAMVIRELNNNWQSHAFDGYEVNWTEQQQTVSCLHTLVYPLAQGQGLHVTGISWNSTGSVLACAYGRLDDGDWSTLKSYVCTWNLDRQGLNPQQPSVVVEVPSAVMCLAFHPTQPSHIAGGLYSGEVLVWDMSRPEDPLLWRTGLTDDTHTDPVYQVLWLPEPRHSHRFQVLSAATDGKVLLWRGSGAGQLRLTKGFALAVQQLPRSTKLKKPPRGETEVGVTSVAFSSFDSSLFVLGTEGGFPLKCSLASEVAALTRMPSSVPLRAPVQFTFSPHGGPVYSVSCSPFHRNLFLSAGTDGHVHLYSMLQAQPLTSLQLSHKYLFAVRWSPVRPLVFAAASGEGDVQLFDLQKSSQKPTVSITQTQDGSPVYCLEFNSQQTQLLAAGDAKGMVKVWQLSTAFTEQGPREVEDLDQLEAEITT</sequence>
<organism>
    <name type="scientific">Mus musculus</name>
    <name type="common">Mouse</name>
    <dbReference type="NCBI Taxonomy" id="10090"/>
    <lineage>
        <taxon>Eukaryota</taxon>
        <taxon>Metazoa</taxon>
        <taxon>Chordata</taxon>
        <taxon>Craniata</taxon>
        <taxon>Vertebrata</taxon>
        <taxon>Euteleostomi</taxon>
        <taxon>Mammalia</taxon>
        <taxon>Eutheria</taxon>
        <taxon>Euarchontoglires</taxon>
        <taxon>Glires</taxon>
        <taxon>Rodentia</taxon>
        <taxon>Myomorpha</taxon>
        <taxon>Muroidea</taxon>
        <taxon>Muridae</taxon>
        <taxon>Murinae</taxon>
        <taxon>Mus</taxon>
        <taxon>Mus</taxon>
    </lineage>
</organism>
<protein>
    <recommendedName>
        <fullName>Cytoplasmic dynein 2 intermediate chain 2</fullName>
    </recommendedName>
    <alternativeName>
        <fullName>Dynein 2 intermediate chain 2</fullName>
    </alternativeName>
    <alternativeName>
        <fullName>WD repeat-containing protein 34</fullName>
    </alternativeName>
</protein>
<proteinExistence type="evidence at protein level"/>
<keyword id="KW-0966">Cell projection</keyword>
<keyword id="KW-0963">Cytoplasm</keyword>
<keyword id="KW-0206">Cytoskeleton</keyword>
<keyword id="KW-0597">Phosphoprotein</keyword>
<keyword id="KW-1185">Reference proteome</keyword>
<keyword id="KW-0677">Repeat</keyword>
<keyword id="KW-0853">WD repeat</keyword>
<dbReference type="EMBL" id="BX005298">
    <property type="status" value="NOT_ANNOTATED_CDS"/>
    <property type="molecule type" value="Genomic_DNA"/>
</dbReference>
<dbReference type="EMBL" id="AL928926">
    <property type="status" value="NOT_ANNOTATED_CDS"/>
    <property type="molecule type" value="Genomic_DNA"/>
</dbReference>
<dbReference type="EMBL" id="BC085113">
    <property type="protein sequence ID" value="AAH85113.1"/>
    <property type="status" value="ALT_INIT"/>
    <property type="molecule type" value="mRNA"/>
</dbReference>
<dbReference type="CCDS" id="CCDS15865.2"/>
<dbReference type="RefSeq" id="NP_001008498.2">
    <property type="nucleotide sequence ID" value="NM_001008498.2"/>
</dbReference>
<dbReference type="SMR" id="Q5U4F6"/>
<dbReference type="BioGRID" id="214952">
    <property type="interactions" value="3"/>
</dbReference>
<dbReference type="FunCoup" id="Q5U4F6">
    <property type="interactions" value="507"/>
</dbReference>
<dbReference type="IntAct" id="Q5U4F6">
    <property type="interactions" value="2"/>
</dbReference>
<dbReference type="MINT" id="Q5U4F6"/>
<dbReference type="STRING" id="10090.ENSMUSP00000109340"/>
<dbReference type="iPTMnet" id="Q5U4F6"/>
<dbReference type="PhosphoSitePlus" id="Q5U4F6"/>
<dbReference type="SwissPalm" id="Q5U4F6"/>
<dbReference type="PaxDb" id="10090-ENSMUSP00000109340"/>
<dbReference type="ProteomicsDB" id="297943"/>
<dbReference type="ProteomicsDB" id="333076"/>
<dbReference type="Pumba" id="Q5U4F6"/>
<dbReference type="Antibodypedia" id="31223">
    <property type="antibodies" value="115 antibodies from 17 providers"/>
</dbReference>
<dbReference type="DNASU" id="71820"/>
<dbReference type="Ensembl" id="ENSMUST00000113711.3">
    <property type="protein sequence ID" value="ENSMUSP00000109340.3"/>
    <property type="gene ID" value="ENSMUSG00000039715.9"/>
</dbReference>
<dbReference type="GeneID" id="71820"/>
<dbReference type="KEGG" id="mmu:71820"/>
<dbReference type="AGR" id="MGI:1919070"/>
<dbReference type="CTD" id="89891"/>
<dbReference type="MGI" id="MGI:1919070">
    <property type="gene designation" value="Dync2i2"/>
</dbReference>
<dbReference type="VEuPathDB" id="HostDB:ENSMUSG00000039715"/>
<dbReference type="eggNOG" id="KOG1587">
    <property type="taxonomic scope" value="Eukaryota"/>
</dbReference>
<dbReference type="GeneTree" id="ENSGT00940000158483"/>
<dbReference type="HOGENOM" id="CLU_031167_1_0_1"/>
<dbReference type="InParanoid" id="Q5U4F6"/>
<dbReference type="OMA" id="SYVCAWN"/>
<dbReference type="OrthoDB" id="445052at2759"/>
<dbReference type="TreeFam" id="TF300553"/>
<dbReference type="Reactome" id="R-MMU-5620924">
    <property type="pathway name" value="Intraflagellar transport"/>
</dbReference>
<dbReference type="BioGRID-ORCS" id="71820">
    <property type="hits" value="4 hits in 77 CRISPR screens"/>
</dbReference>
<dbReference type="ChiTaRS" id="Wdr34">
    <property type="organism name" value="mouse"/>
</dbReference>
<dbReference type="PRO" id="PR:Q5U4F6"/>
<dbReference type="Proteomes" id="UP000000589">
    <property type="component" value="Chromosome 2"/>
</dbReference>
<dbReference type="RNAct" id="Q5U4F6">
    <property type="molecule type" value="protein"/>
</dbReference>
<dbReference type="Bgee" id="ENSMUSG00000039715">
    <property type="expression patterns" value="Expressed in spermatocyte and 190 other cell types or tissues"/>
</dbReference>
<dbReference type="GO" id="GO:0005930">
    <property type="term" value="C:axoneme"/>
    <property type="evidence" value="ECO:0000314"/>
    <property type="project" value="UniProtKB"/>
</dbReference>
<dbReference type="GO" id="GO:0005814">
    <property type="term" value="C:centriole"/>
    <property type="evidence" value="ECO:0000314"/>
    <property type="project" value="UniProtKB"/>
</dbReference>
<dbReference type="GO" id="GO:0005813">
    <property type="term" value="C:centrosome"/>
    <property type="evidence" value="ECO:0000250"/>
    <property type="project" value="UniProtKB"/>
</dbReference>
<dbReference type="GO" id="GO:0036064">
    <property type="term" value="C:ciliary basal body"/>
    <property type="evidence" value="ECO:0000314"/>
    <property type="project" value="UniProtKB"/>
</dbReference>
<dbReference type="GO" id="GO:0005929">
    <property type="term" value="C:cilium"/>
    <property type="evidence" value="ECO:0000315"/>
    <property type="project" value="UniProtKB"/>
</dbReference>
<dbReference type="GO" id="GO:0005868">
    <property type="term" value="C:cytoplasmic dynein complex"/>
    <property type="evidence" value="ECO:0000353"/>
    <property type="project" value="MGI"/>
</dbReference>
<dbReference type="GO" id="GO:0005829">
    <property type="term" value="C:cytosol"/>
    <property type="evidence" value="ECO:0007669"/>
    <property type="project" value="Ensembl"/>
</dbReference>
<dbReference type="GO" id="GO:0030175">
    <property type="term" value="C:filopodium"/>
    <property type="evidence" value="ECO:0000315"/>
    <property type="project" value="UniProtKB"/>
</dbReference>
<dbReference type="GO" id="GO:0016604">
    <property type="term" value="C:nuclear body"/>
    <property type="evidence" value="ECO:0007669"/>
    <property type="project" value="Ensembl"/>
</dbReference>
<dbReference type="GO" id="GO:0031965">
    <property type="term" value="C:nuclear membrane"/>
    <property type="evidence" value="ECO:0007669"/>
    <property type="project" value="Ensembl"/>
</dbReference>
<dbReference type="GO" id="GO:0005730">
    <property type="term" value="C:nucleolus"/>
    <property type="evidence" value="ECO:0007669"/>
    <property type="project" value="Ensembl"/>
</dbReference>
<dbReference type="GO" id="GO:0045503">
    <property type="term" value="F:dynein light chain binding"/>
    <property type="evidence" value="ECO:0007669"/>
    <property type="project" value="Ensembl"/>
</dbReference>
<dbReference type="GO" id="GO:0060271">
    <property type="term" value="P:cilium assembly"/>
    <property type="evidence" value="ECO:0000314"/>
    <property type="project" value="UniProtKB"/>
</dbReference>
<dbReference type="GO" id="GO:0035721">
    <property type="term" value="P:intraciliary retrograde transport"/>
    <property type="evidence" value="ECO:0000315"/>
    <property type="project" value="UniProtKB"/>
</dbReference>
<dbReference type="FunFam" id="2.130.10.10:FF:000283">
    <property type="entry name" value="WD repeat domain 34"/>
    <property type="match status" value="1"/>
</dbReference>
<dbReference type="FunFam" id="2.130.10.10:FF:000507">
    <property type="entry name" value="WD repeat domain 34"/>
    <property type="match status" value="1"/>
</dbReference>
<dbReference type="Gene3D" id="2.130.10.10">
    <property type="entry name" value="YVTN repeat-like/Quinoprotein amine dehydrogenase"/>
    <property type="match status" value="2"/>
</dbReference>
<dbReference type="InterPro" id="IPR050687">
    <property type="entry name" value="Dynein_IC"/>
</dbReference>
<dbReference type="InterPro" id="IPR015943">
    <property type="entry name" value="WD40/YVTN_repeat-like_dom_sf"/>
</dbReference>
<dbReference type="InterPro" id="IPR036322">
    <property type="entry name" value="WD40_repeat_dom_sf"/>
</dbReference>
<dbReference type="InterPro" id="IPR001680">
    <property type="entry name" value="WD40_rpt"/>
</dbReference>
<dbReference type="PANTHER" id="PTHR12442:SF26">
    <property type="entry name" value="CYTOPLASMIC DYNEIN 2 INTERMEDIATE CHAIN 2"/>
    <property type="match status" value="1"/>
</dbReference>
<dbReference type="PANTHER" id="PTHR12442">
    <property type="entry name" value="DYNEIN INTERMEDIATE CHAIN"/>
    <property type="match status" value="1"/>
</dbReference>
<dbReference type="Pfam" id="PF00400">
    <property type="entry name" value="WD40"/>
    <property type="match status" value="2"/>
</dbReference>
<dbReference type="SMART" id="SM00320">
    <property type="entry name" value="WD40"/>
    <property type="match status" value="5"/>
</dbReference>
<dbReference type="SUPFAM" id="SSF50978">
    <property type="entry name" value="WD40 repeat-like"/>
    <property type="match status" value="1"/>
</dbReference>
<dbReference type="PROSITE" id="PS50294">
    <property type="entry name" value="WD_REPEATS_REGION"/>
    <property type="match status" value="1"/>
</dbReference>
<accession>Q5U4F6</accession>
<accession>A2BE91</accession>